<feature type="chain" id="PRO_0000114218" description="Chromosomal replication initiator protein DnaA">
    <location>
        <begin position="1"/>
        <end position="507"/>
    </location>
</feature>
<feature type="region of interest" description="Domain I, interacts with DnaA modulators" evidence="1">
    <location>
        <begin position="1"/>
        <end position="112"/>
    </location>
</feature>
<feature type="region of interest" description="Disordered" evidence="2">
    <location>
        <begin position="99"/>
        <end position="155"/>
    </location>
</feature>
<feature type="region of interest" description="Domain II" evidence="1">
    <location>
        <begin position="113"/>
        <end position="166"/>
    </location>
</feature>
<feature type="region of interest" description="Domain III, AAA+ region" evidence="1">
    <location>
        <begin position="167"/>
        <end position="383"/>
    </location>
</feature>
<feature type="region of interest" description="Domain IV, binds dsDNA" evidence="1 7">
    <location>
        <begin position="384"/>
        <end position="507"/>
    </location>
</feature>
<feature type="compositionally biased region" description="Polar residues" evidence="2">
    <location>
        <begin position="113"/>
        <end position="127"/>
    </location>
</feature>
<feature type="binding site" evidence="1">
    <location>
        <position position="211"/>
    </location>
    <ligand>
        <name>ATP</name>
        <dbReference type="ChEBI" id="CHEBI:30616"/>
    </ligand>
</feature>
<feature type="binding site" evidence="1">
    <location>
        <position position="213"/>
    </location>
    <ligand>
        <name>ATP</name>
        <dbReference type="ChEBI" id="CHEBI:30616"/>
    </ligand>
</feature>
<feature type="binding site" evidence="1">
    <location>
        <position position="214"/>
    </location>
    <ligand>
        <name>ATP</name>
        <dbReference type="ChEBI" id="CHEBI:30616"/>
    </ligand>
</feature>
<feature type="binding site" evidence="1">
    <location>
        <position position="215"/>
    </location>
    <ligand>
        <name>ATP</name>
        <dbReference type="ChEBI" id="CHEBI:30616"/>
    </ligand>
</feature>
<feature type="mutagenesis site" description="Domain IV binds a strong consensus box about 140-fold more weakly than the wild-type." evidence="5">
    <original>K</original>
    <variation>A</variation>
    <location>
        <position position="436"/>
    </location>
</feature>
<feature type="sequence conflict" description="In Ref. 4; AAA85543." evidence="6" ref="4">
    <original>S</original>
    <variation>R</variation>
    <location>
        <position position="363"/>
    </location>
</feature>
<feature type="sequence conflict" description="In Ref. 4; AAA85543." evidence="6" ref="4">
    <original>E</original>
    <variation>V</variation>
    <location>
        <position position="371"/>
    </location>
</feature>
<feature type="sequence conflict" description="In Ref. 4; AAA85543." evidence="6" ref="4">
    <original>A</original>
    <variation>P</variation>
    <location>
        <position position="381"/>
    </location>
</feature>
<feature type="sequence conflict" description="In Ref. 4; AAA85543." evidence="6" ref="4">
    <original>EE</original>
    <variation>GR</variation>
    <location>
        <begin position="429"/>
        <end position="430"/>
    </location>
</feature>
<feature type="sequence conflict" description="In Ref. 1; AAB38528." evidence="6" ref="1">
    <original>M</original>
    <variation>V</variation>
    <location>
        <position position="448"/>
    </location>
</feature>
<feature type="sequence conflict" description="In Ref. 4; AAA85543." evidence="6" ref="4">
    <original>S</original>
    <variation>P</variation>
    <location>
        <position position="458"/>
    </location>
</feature>
<feature type="helix" evidence="10">
    <location>
        <begin position="413"/>
        <end position="423"/>
    </location>
</feature>
<feature type="helix" evidence="10">
    <location>
        <begin position="428"/>
        <end position="432"/>
    </location>
</feature>
<feature type="helix" evidence="10">
    <location>
        <begin position="438"/>
        <end position="454"/>
    </location>
</feature>
<feature type="helix" evidence="10">
    <location>
        <begin position="459"/>
        <end position="465"/>
    </location>
</feature>
<feature type="helix" evidence="10">
    <location>
        <begin position="470"/>
        <end position="486"/>
    </location>
</feature>
<feature type="helix" evidence="10">
    <location>
        <begin position="488"/>
        <end position="505"/>
    </location>
</feature>
<name>DNAA_MYCTU</name>
<comment type="function">
    <text evidence="1">Plays an essential role in the initiation and regulation of chromosomal replication. ATP-DnaA binds to the origin of replication (oriC) to initiate formation of the DNA replication initiation complex once per cell cycle. Binds the DnaA box (a 9 base pair repeat at the origin) and separates the double-stranded (ds)DNA. Forms a right-handed helical filament on oriC DNA; dsDNA binds to the exterior of the filament while single-stranded (ss)DNA is stabiized in the filament's interior. The ATP-DnaA-oriC complex binds and stabilizes one strand of the AT-rich DNA unwinding element (DUE), permitting loading of DNA polymerase. After initiation quickly degrades to an ADP-DnaA complex that is not apt for DNA replication. Binds acidic phospholipids.</text>
</comment>
<comment type="function">
    <text evidence="3 4 5">The Mycobacterium DnaA box consensus is 5'-[T/C][T/C][G/A]TNC[A/C]CA-3' (PubMed:21620858). Has a weak ATPase activity that is stimulated by oriC DNA (PubMed:18296714). DnaA binds to ATP which it exchanges for ADP, and to phospholipids (PubMed:18296714). Binds its own promoter (PubMed:16629667).</text>
</comment>
<comment type="subunit">
    <text evidence="1">Oligomerizes as a right-handed, spiral filament on DNA at oriC.</text>
</comment>
<comment type="subcellular location">
    <subcellularLocation>
        <location evidence="1">Cytoplasm</location>
    </subcellularLocation>
    <subcellularLocation>
        <location evidence="4">Cell membrane</location>
    </subcellularLocation>
    <subcellularLocation>
        <location evidence="4">Secreted</location>
        <location evidence="4">Cell wall</location>
    </subcellularLocation>
    <text evidence="4 6">Very little protein is found in soluble extracts (PubMed:18296714). Nucleoid-associated protein is probably also in the cell membrane fraction (Probable).</text>
</comment>
<comment type="induction">
    <text evidence="3">Transcription depends on the two-component regulatory system MtrA/MtrB.</text>
</comment>
<comment type="domain">
    <text evidence="1">Domain I is involved in oligomerization and binding regulators, domain II is flexibile and of varying length in different bacteria, domain III forms the AAA+ region, while domain IV binds dsDNA.</text>
</comment>
<comment type="similarity">
    <text evidence="1 6">Belongs to the DnaA family.</text>
</comment>
<proteinExistence type="evidence at protein level"/>
<evidence type="ECO:0000255" key="1">
    <source>
        <dbReference type="HAMAP-Rule" id="MF_00377"/>
    </source>
</evidence>
<evidence type="ECO:0000256" key="2">
    <source>
        <dbReference type="SAM" id="MobiDB-lite"/>
    </source>
</evidence>
<evidence type="ECO:0000269" key="3">
    <source>
    </source>
</evidence>
<evidence type="ECO:0000269" key="4">
    <source>
    </source>
</evidence>
<evidence type="ECO:0000269" key="5">
    <source>
    </source>
</evidence>
<evidence type="ECO:0000305" key="6"/>
<evidence type="ECO:0000305" key="7">
    <source>
    </source>
</evidence>
<evidence type="ECO:0007744" key="8">
    <source>
        <dbReference type="PDB" id="3PVP"/>
    </source>
</evidence>
<evidence type="ECO:0007744" key="9">
    <source>
        <dbReference type="PDB" id="3PVV"/>
    </source>
</evidence>
<evidence type="ECO:0007829" key="10">
    <source>
        <dbReference type="PDB" id="3PVV"/>
    </source>
</evidence>
<organism>
    <name type="scientific">Mycobacterium tuberculosis (strain ATCC 25618 / H37Rv)</name>
    <dbReference type="NCBI Taxonomy" id="83332"/>
    <lineage>
        <taxon>Bacteria</taxon>
        <taxon>Bacillati</taxon>
        <taxon>Actinomycetota</taxon>
        <taxon>Actinomycetes</taxon>
        <taxon>Mycobacteriales</taxon>
        <taxon>Mycobacteriaceae</taxon>
        <taxon>Mycobacterium</taxon>
        <taxon>Mycobacterium tuberculosis complex</taxon>
    </lineage>
</organism>
<sequence length="507" mass="56567">MTDDPGSGFTTVWNAVVSELNGDPKVDDGPSSDANLSAPLTPQQRAWLNLVQPLTIVEGFALLSVPSSFVQNEIERHLRAPITDALSRRLGHQIQLGVRIAPPATDEADDTTVPPSENPATTSPDTTTDNDEIDDSAAARGDNQHSWPSYFTERPHNTDSATAGVTSLNRRYTFDTFVIGASNRFAHAAALAIAEAPARAYNPLFIWGESGLGKTHLLHAAGNYAQRLFPGMRVKYVSTEEFTNDFINSLRDDRKVAFKRSYRDVDVLLVDDIQFIEGKEGIQEEFFHTFNTLHNANKQIVISSDRPPKQLATLEDRLRTRFEWGLITDVQPPELETRIAILRKKAQMERLAVPDDVLELIASSIERNIRELEGALIRVTAFASLNKTPIDKALAEIVLRDLIADANTMQISAATIMAATAEYFDTTVEELRGPGKTRALAQSRQIAMYLCRELTDLSLPKIGQAFGRDHTTVMYAQRKILSEMAERREVFDHVKELTTRIRQRSKR</sequence>
<protein>
    <recommendedName>
        <fullName evidence="1">Chromosomal replication initiator protein DnaA</fullName>
        <ecNumber evidence="4">3.6.4.-</ecNumber>
    </recommendedName>
</protein>
<keyword id="KW-0002">3D-structure</keyword>
<keyword id="KW-0067">ATP-binding</keyword>
<keyword id="KW-1003">Cell membrane</keyword>
<keyword id="KW-0134">Cell wall</keyword>
<keyword id="KW-0963">Cytoplasm</keyword>
<keyword id="KW-0235">DNA replication</keyword>
<keyword id="KW-0238">DNA-binding</keyword>
<keyword id="KW-0378">Hydrolase</keyword>
<keyword id="KW-0446">Lipid-binding</keyword>
<keyword id="KW-0472">Membrane</keyword>
<keyword id="KW-0547">Nucleotide-binding</keyword>
<keyword id="KW-1185">Reference proteome</keyword>
<keyword id="KW-0964">Secreted</keyword>
<dbReference type="EC" id="3.6.4.-" evidence="4"/>
<dbReference type="EMBL" id="U38891">
    <property type="protein sequence ID" value="AAB38528.2"/>
    <property type="molecule type" value="Genomic_DNA"/>
</dbReference>
<dbReference type="EMBL" id="X92504">
    <property type="protein sequence ID" value="CAA63257.1"/>
    <property type="molecule type" value="Genomic_DNA"/>
</dbReference>
<dbReference type="EMBL" id="AL123456">
    <property type="protein sequence ID" value="CCP42723.1"/>
    <property type="molecule type" value="Genomic_DNA"/>
</dbReference>
<dbReference type="EMBL" id="U19184">
    <property type="protein sequence ID" value="AAA85543.1"/>
    <property type="molecule type" value="Genomic_DNA"/>
</dbReference>
<dbReference type="PIR" id="S70982">
    <property type="entry name" value="S70982"/>
</dbReference>
<dbReference type="RefSeq" id="NP_214515.1">
    <property type="nucleotide sequence ID" value="NC_000962.3"/>
</dbReference>
<dbReference type="RefSeq" id="WP_003400253.1">
    <property type="nucleotide sequence ID" value="NZ_NVQJ01000005.1"/>
</dbReference>
<dbReference type="PDB" id="3PVP">
    <property type="method" value="X-ray"/>
    <property type="resolution" value="2.30 A"/>
    <property type="chains" value="A/B=411-507"/>
</dbReference>
<dbReference type="PDB" id="3PVV">
    <property type="method" value="X-ray"/>
    <property type="resolution" value="2.00 A"/>
    <property type="chains" value="A/B=411-507"/>
</dbReference>
<dbReference type="PDBsum" id="3PVP"/>
<dbReference type="PDBsum" id="3PVV"/>
<dbReference type="SMR" id="P9WNW3"/>
<dbReference type="FunCoup" id="P9WNW3">
    <property type="interactions" value="117"/>
</dbReference>
<dbReference type="STRING" id="83332.Rv0001"/>
<dbReference type="PaxDb" id="83332-Rv0001"/>
<dbReference type="DNASU" id="885041"/>
<dbReference type="GeneID" id="45423958"/>
<dbReference type="GeneID" id="885041"/>
<dbReference type="KEGG" id="mtu:Rv0001"/>
<dbReference type="KEGG" id="mtv:RVBD_0001"/>
<dbReference type="TubercuList" id="Rv0001"/>
<dbReference type="eggNOG" id="COG0593">
    <property type="taxonomic scope" value="Bacteria"/>
</dbReference>
<dbReference type="InParanoid" id="P9WNW3"/>
<dbReference type="OrthoDB" id="9807019at2"/>
<dbReference type="PhylomeDB" id="P9WNW3"/>
<dbReference type="Proteomes" id="UP000001584">
    <property type="component" value="Chromosome"/>
</dbReference>
<dbReference type="GO" id="GO:0005737">
    <property type="term" value="C:cytoplasm"/>
    <property type="evidence" value="ECO:0007669"/>
    <property type="project" value="UniProtKB-SubCell"/>
</dbReference>
<dbReference type="GO" id="GO:0005576">
    <property type="term" value="C:extracellular region"/>
    <property type="evidence" value="ECO:0007669"/>
    <property type="project" value="UniProtKB-KW"/>
</dbReference>
<dbReference type="GO" id="GO:0009274">
    <property type="term" value="C:peptidoglycan-based cell wall"/>
    <property type="evidence" value="ECO:0007005"/>
    <property type="project" value="MTBBASE"/>
</dbReference>
<dbReference type="GO" id="GO:0005886">
    <property type="term" value="C:plasma membrane"/>
    <property type="evidence" value="ECO:0007005"/>
    <property type="project" value="MTBBASE"/>
</dbReference>
<dbReference type="GO" id="GO:0005524">
    <property type="term" value="F:ATP binding"/>
    <property type="evidence" value="ECO:0000314"/>
    <property type="project" value="MTBBASE"/>
</dbReference>
<dbReference type="GO" id="GO:0016887">
    <property type="term" value="F:ATP hydrolysis activity"/>
    <property type="evidence" value="ECO:0000314"/>
    <property type="project" value="MTBBASE"/>
</dbReference>
<dbReference type="GO" id="GO:0003688">
    <property type="term" value="F:DNA replication origin binding"/>
    <property type="evidence" value="ECO:0000314"/>
    <property type="project" value="MTBBASE"/>
</dbReference>
<dbReference type="GO" id="GO:0008289">
    <property type="term" value="F:lipid binding"/>
    <property type="evidence" value="ECO:0007669"/>
    <property type="project" value="UniProtKB-KW"/>
</dbReference>
<dbReference type="GO" id="GO:0006260">
    <property type="term" value="P:DNA replication"/>
    <property type="evidence" value="ECO:0000318"/>
    <property type="project" value="GO_Central"/>
</dbReference>
<dbReference type="GO" id="GO:0006270">
    <property type="term" value="P:DNA replication initiation"/>
    <property type="evidence" value="ECO:0000318"/>
    <property type="project" value="GO_Central"/>
</dbReference>
<dbReference type="GO" id="GO:0006275">
    <property type="term" value="P:regulation of DNA replication"/>
    <property type="evidence" value="ECO:0007669"/>
    <property type="project" value="UniProtKB-UniRule"/>
</dbReference>
<dbReference type="CDD" id="cd00009">
    <property type="entry name" value="AAA"/>
    <property type="match status" value="1"/>
</dbReference>
<dbReference type="CDD" id="cd06571">
    <property type="entry name" value="Bac_DnaA_C"/>
    <property type="match status" value="1"/>
</dbReference>
<dbReference type="FunFam" id="1.10.1750.10:FF:000002">
    <property type="entry name" value="Chromosomal replication initiator protein DnaA"/>
    <property type="match status" value="1"/>
</dbReference>
<dbReference type="FunFam" id="1.10.8.60:FF:000003">
    <property type="entry name" value="Chromosomal replication initiator protein DnaA"/>
    <property type="match status" value="1"/>
</dbReference>
<dbReference type="FunFam" id="3.40.50.300:FF:000150">
    <property type="entry name" value="Chromosomal replication initiator protein DnaA"/>
    <property type="match status" value="1"/>
</dbReference>
<dbReference type="Gene3D" id="1.10.1750.10">
    <property type="match status" value="1"/>
</dbReference>
<dbReference type="Gene3D" id="1.10.8.60">
    <property type="match status" value="1"/>
</dbReference>
<dbReference type="Gene3D" id="3.30.300.180">
    <property type="match status" value="1"/>
</dbReference>
<dbReference type="Gene3D" id="3.40.50.300">
    <property type="entry name" value="P-loop containing nucleotide triphosphate hydrolases"/>
    <property type="match status" value="1"/>
</dbReference>
<dbReference type="HAMAP" id="MF_00377">
    <property type="entry name" value="DnaA_bact"/>
    <property type="match status" value="1"/>
</dbReference>
<dbReference type="InterPro" id="IPR003593">
    <property type="entry name" value="AAA+_ATPase"/>
</dbReference>
<dbReference type="InterPro" id="IPR001957">
    <property type="entry name" value="Chromosome_initiator_DnaA"/>
</dbReference>
<dbReference type="InterPro" id="IPR020591">
    <property type="entry name" value="Chromosome_initiator_DnaA-like"/>
</dbReference>
<dbReference type="InterPro" id="IPR018312">
    <property type="entry name" value="Chromosome_initiator_DnaA_CS"/>
</dbReference>
<dbReference type="InterPro" id="IPR013159">
    <property type="entry name" value="DnaA_C"/>
</dbReference>
<dbReference type="InterPro" id="IPR013317">
    <property type="entry name" value="DnaA_dom"/>
</dbReference>
<dbReference type="InterPro" id="IPR038454">
    <property type="entry name" value="DnaA_N_sf"/>
</dbReference>
<dbReference type="InterPro" id="IPR027417">
    <property type="entry name" value="P-loop_NTPase"/>
</dbReference>
<dbReference type="InterPro" id="IPR010921">
    <property type="entry name" value="Trp_repressor/repl_initiator"/>
</dbReference>
<dbReference type="NCBIfam" id="TIGR00362">
    <property type="entry name" value="DnaA"/>
    <property type="match status" value="1"/>
</dbReference>
<dbReference type="NCBIfam" id="NF010686">
    <property type="entry name" value="PRK14086.1"/>
    <property type="match status" value="1"/>
</dbReference>
<dbReference type="PANTHER" id="PTHR30050">
    <property type="entry name" value="CHROMOSOMAL REPLICATION INITIATOR PROTEIN DNAA"/>
    <property type="match status" value="1"/>
</dbReference>
<dbReference type="PANTHER" id="PTHR30050:SF2">
    <property type="entry name" value="CHROMOSOMAL REPLICATION INITIATOR PROTEIN DNAA"/>
    <property type="match status" value="1"/>
</dbReference>
<dbReference type="Pfam" id="PF00308">
    <property type="entry name" value="Bac_DnaA"/>
    <property type="match status" value="1"/>
</dbReference>
<dbReference type="Pfam" id="PF08299">
    <property type="entry name" value="Bac_DnaA_C"/>
    <property type="match status" value="1"/>
</dbReference>
<dbReference type="PRINTS" id="PR00051">
    <property type="entry name" value="DNAA"/>
</dbReference>
<dbReference type="SMART" id="SM00382">
    <property type="entry name" value="AAA"/>
    <property type="match status" value="1"/>
</dbReference>
<dbReference type="SMART" id="SM00760">
    <property type="entry name" value="Bac_DnaA_C"/>
    <property type="match status" value="1"/>
</dbReference>
<dbReference type="SUPFAM" id="SSF52540">
    <property type="entry name" value="P-loop containing nucleoside triphosphate hydrolases"/>
    <property type="match status" value="1"/>
</dbReference>
<dbReference type="SUPFAM" id="SSF48295">
    <property type="entry name" value="TrpR-like"/>
    <property type="match status" value="1"/>
</dbReference>
<dbReference type="PROSITE" id="PS01008">
    <property type="entry name" value="DNAA"/>
    <property type="match status" value="1"/>
</dbReference>
<gene>
    <name evidence="1" type="primary">dnaA</name>
    <name type="ordered locus">Rv0001</name>
    <name type="ORF">MTV029.01</name>
</gene>
<accession>P9WNW3</accession>
<accession>L0T412</accession>
<accession>P49993</accession>
<accession>P95309</accession>
<accession>Q59585</accession>
<reference key="1">
    <citation type="submission" date="1995-10" db="EMBL/GenBank/DDBJ databases">
        <title>The dnaA gene region of M. tuberculosis.</title>
        <authorList>
            <person name="Qin M.H."/>
            <person name="Madiraju M.V."/>
            <person name="Rajagopalan M."/>
        </authorList>
    </citation>
    <scope>NUCLEOTIDE SEQUENCE [GENOMIC DNA]</scope>
</reference>
<reference key="2">
    <citation type="journal article" date="1996" name="Mol. Microbiol.">
        <title>Organization of the origins of replication of the chromosomes of Mycobacterium smegmatis, Mycobacterium leprae and Mycobacterium tuberculosis and isolation of a functional origin from M. smegmatis.</title>
        <authorList>
            <person name="Salazar L."/>
            <person name="Fsihi H."/>
            <person name="De Rossi E."/>
            <person name="Riccardi G."/>
            <person name="Rios C."/>
            <person name="Cole S.T."/>
            <person name="Takiff H.E."/>
        </authorList>
    </citation>
    <scope>NUCLEOTIDE SEQUENCE [GENOMIC DNA]</scope>
    <source>
        <strain>ATCC 25618 / H37Rv</strain>
    </source>
</reference>
<reference key="3">
    <citation type="journal article" date="1998" name="Nature">
        <title>Deciphering the biology of Mycobacterium tuberculosis from the complete genome sequence.</title>
        <authorList>
            <person name="Cole S.T."/>
            <person name="Brosch R."/>
            <person name="Parkhill J."/>
            <person name="Garnier T."/>
            <person name="Churcher C.M."/>
            <person name="Harris D.E."/>
            <person name="Gordon S.V."/>
            <person name="Eiglmeier K."/>
            <person name="Gas S."/>
            <person name="Barry C.E. III"/>
            <person name="Tekaia F."/>
            <person name="Badcock K."/>
            <person name="Basham D."/>
            <person name="Brown D."/>
            <person name="Chillingworth T."/>
            <person name="Connor R."/>
            <person name="Davies R.M."/>
            <person name="Devlin K."/>
            <person name="Feltwell T."/>
            <person name="Gentles S."/>
            <person name="Hamlin N."/>
            <person name="Holroyd S."/>
            <person name="Hornsby T."/>
            <person name="Jagels K."/>
            <person name="Krogh A."/>
            <person name="McLean J."/>
            <person name="Moule S."/>
            <person name="Murphy L.D."/>
            <person name="Oliver S."/>
            <person name="Osborne J."/>
            <person name="Quail M.A."/>
            <person name="Rajandream M.A."/>
            <person name="Rogers J."/>
            <person name="Rutter S."/>
            <person name="Seeger K."/>
            <person name="Skelton S."/>
            <person name="Squares S."/>
            <person name="Squares R."/>
            <person name="Sulston J.E."/>
            <person name="Taylor K."/>
            <person name="Whitehead S."/>
            <person name="Barrell B.G."/>
        </authorList>
    </citation>
    <scope>NUCLEOTIDE SEQUENCE [LARGE SCALE GENOMIC DNA]</scope>
    <source>
        <strain>ATCC 25618 / H37Rv</strain>
    </source>
</reference>
<reference key="4">
    <citation type="journal article" date="1995" name="Gene">
        <title>Amplification and cloning of the Mycobacterium tuberculosis dnaA gene.</title>
        <authorList>
            <person name="Rajagopalan M."/>
            <person name="Qin M.H."/>
            <person name="Steingrube V.A."/>
            <person name="Nash D.R."/>
            <person name="Wallace R.J. Jr."/>
            <person name="Madiraju M.V.V.S."/>
        </authorList>
    </citation>
    <scope>NUCLEOTIDE SEQUENCE [GENOMIC DNA] OF 213-472</scope>
    <source>
        <strain>H37Rv</strain>
    </source>
</reference>
<reference key="5">
    <citation type="journal article" date="2006" name="Mol. Microbiol.">
        <title>Modulation of Mycobacterium tuberculosis proliferation by MtrA, an essential two-component response regulator.</title>
        <authorList>
            <person name="Fol M."/>
            <person name="Chauhan A."/>
            <person name="Nair N.K."/>
            <person name="Maloney E."/>
            <person name="Moomey M."/>
            <person name="Jagannath C."/>
            <person name="Madiraju M.V."/>
            <person name="Rajagopalan M."/>
        </authorList>
    </citation>
    <scope>INDUCTION</scope>
    <scope>DNA-BINDING</scope>
    <source>
        <strain>ATCC 25618 / H37Rv</strain>
    </source>
</reference>
<reference key="6">
    <citation type="journal article" date="2008" name="J. Biochem.">
        <title>Facilitation of dissociation reaction of nucleotides bound to Mycobacterium tuberculosis DnaA.</title>
        <authorList>
            <person name="Yamamoto K."/>
            <person name="Moomey M."/>
            <person name="Rajagopalan M."/>
            <person name="Madiraju M.V."/>
        </authorList>
    </citation>
    <scope>FUNCTION AS A WEAK ATPASE</scope>
    <scope>SUBCELLULAR LOCATION</scope>
    <scope>ATP- AND ADP-BINDING</scope>
    <scope>PHOSPHOLIPID-BINDING</scope>
</reference>
<reference key="7">
    <citation type="journal article" date="2011" name="Mol. Cell. Proteomics">
        <title>Proteogenomic analysis of Mycobacterium tuberculosis by high resolution mass spectrometry.</title>
        <authorList>
            <person name="Kelkar D.S."/>
            <person name="Kumar D."/>
            <person name="Kumar P."/>
            <person name="Balakrishnan L."/>
            <person name="Muthusamy B."/>
            <person name="Yadav A.K."/>
            <person name="Shrivastava P."/>
            <person name="Marimuthu A."/>
            <person name="Anand S."/>
            <person name="Sundaram H."/>
            <person name="Kingsbury R."/>
            <person name="Harsha H.C."/>
            <person name="Nair B."/>
            <person name="Prasad T.S."/>
            <person name="Chauhan D.S."/>
            <person name="Katoch K."/>
            <person name="Katoch V.M."/>
            <person name="Kumar P."/>
            <person name="Chaerkady R."/>
            <person name="Ramachandran S."/>
            <person name="Dash D."/>
            <person name="Pandey A."/>
        </authorList>
    </citation>
    <scope>IDENTIFICATION BY MASS SPECTROMETRY [LARGE SCALE ANALYSIS]</scope>
    <source>
        <strain>ATCC 25618 / H37Rv</strain>
    </source>
</reference>
<reference evidence="8 9" key="8">
    <citation type="journal article" date="2011" name="J. Mol. Biol.">
        <title>Structural and thermodynamic signatures of DNA recognition by Mycobacterium tuberculosis DnaA.</title>
        <authorList>
            <person name="Tsodikov O.V."/>
            <person name="Biswas T."/>
        </authorList>
    </citation>
    <scope>X-RAY CRYSTALLOGRAPHY (2.00 ANGSTROMS) OF 411-507 IN COMPLEX WITH DSDNA</scope>
    <scope>DNA-BINDING</scope>
    <scope>MUTAGENESIS OF LYS-436</scope>
    <source>
        <strain>ATCC 25618 / H37Rv</strain>
    </source>
</reference>